<dbReference type="EC" id="6.3.4.2" evidence="1"/>
<dbReference type="EMBL" id="AE005176">
    <property type="protein sequence ID" value="AAK04589.1"/>
    <property type="molecule type" value="Genomic_DNA"/>
</dbReference>
<dbReference type="PIR" id="C86686">
    <property type="entry name" value="C86686"/>
</dbReference>
<dbReference type="RefSeq" id="NP_266647.1">
    <property type="nucleotide sequence ID" value="NC_002662.1"/>
</dbReference>
<dbReference type="RefSeq" id="WP_003131516.1">
    <property type="nucleotide sequence ID" value="NC_002662.1"/>
</dbReference>
<dbReference type="SMR" id="Q9CI75"/>
<dbReference type="PaxDb" id="272623-L88252"/>
<dbReference type="EnsemblBacteria" id="AAK04589">
    <property type="protein sequence ID" value="AAK04589"/>
    <property type="gene ID" value="L88252"/>
</dbReference>
<dbReference type="KEGG" id="lla:L88252"/>
<dbReference type="PATRIC" id="fig|272623.7.peg.531"/>
<dbReference type="eggNOG" id="COG0504">
    <property type="taxonomic scope" value="Bacteria"/>
</dbReference>
<dbReference type="HOGENOM" id="CLU_011675_5_0_9"/>
<dbReference type="OrthoDB" id="9801107at2"/>
<dbReference type="SABIO-RK" id="Q9CI75"/>
<dbReference type="UniPathway" id="UPA00159">
    <property type="reaction ID" value="UER00277"/>
</dbReference>
<dbReference type="Proteomes" id="UP000002196">
    <property type="component" value="Chromosome"/>
</dbReference>
<dbReference type="GO" id="GO:0005829">
    <property type="term" value="C:cytosol"/>
    <property type="evidence" value="ECO:0007669"/>
    <property type="project" value="TreeGrafter"/>
</dbReference>
<dbReference type="GO" id="GO:0005524">
    <property type="term" value="F:ATP binding"/>
    <property type="evidence" value="ECO:0007669"/>
    <property type="project" value="UniProtKB-KW"/>
</dbReference>
<dbReference type="GO" id="GO:0003883">
    <property type="term" value="F:CTP synthase activity"/>
    <property type="evidence" value="ECO:0007669"/>
    <property type="project" value="UniProtKB-UniRule"/>
</dbReference>
<dbReference type="GO" id="GO:0004359">
    <property type="term" value="F:glutaminase activity"/>
    <property type="evidence" value="ECO:0007669"/>
    <property type="project" value="RHEA"/>
</dbReference>
<dbReference type="GO" id="GO:0042802">
    <property type="term" value="F:identical protein binding"/>
    <property type="evidence" value="ECO:0007669"/>
    <property type="project" value="TreeGrafter"/>
</dbReference>
<dbReference type="GO" id="GO:0046872">
    <property type="term" value="F:metal ion binding"/>
    <property type="evidence" value="ECO:0007669"/>
    <property type="project" value="UniProtKB-KW"/>
</dbReference>
<dbReference type="GO" id="GO:0044210">
    <property type="term" value="P:'de novo' CTP biosynthetic process"/>
    <property type="evidence" value="ECO:0007669"/>
    <property type="project" value="UniProtKB-UniRule"/>
</dbReference>
<dbReference type="GO" id="GO:0019856">
    <property type="term" value="P:pyrimidine nucleobase biosynthetic process"/>
    <property type="evidence" value="ECO:0007669"/>
    <property type="project" value="TreeGrafter"/>
</dbReference>
<dbReference type="CDD" id="cd03113">
    <property type="entry name" value="CTPS_N"/>
    <property type="match status" value="1"/>
</dbReference>
<dbReference type="CDD" id="cd01746">
    <property type="entry name" value="GATase1_CTP_Synthase"/>
    <property type="match status" value="1"/>
</dbReference>
<dbReference type="FunFam" id="3.40.50.300:FF:000009">
    <property type="entry name" value="CTP synthase"/>
    <property type="match status" value="1"/>
</dbReference>
<dbReference type="FunFam" id="3.40.50.880:FF:000002">
    <property type="entry name" value="CTP synthase"/>
    <property type="match status" value="1"/>
</dbReference>
<dbReference type="Gene3D" id="3.40.50.880">
    <property type="match status" value="1"/>
</dbReference>
<dbReference type="Gene3D" id="3.40.50.300">
    <property type="entry name" value="P-loop containing nucleotide triphosphate hydrolases"/>
    <property type="match status" value="1"/>
</dbReference>
<dbReference type="HAMAP" id="MF_01227">
    <property type="entry name" value="PyrG"/>
    <property type="match status" value="1"/>
</dbReference>
<dbReference type="InterPro" id="IPR029062">
    <property type="entry name" value="Class_I_gatase-like"/>
</dbReference>
<dbReference type="InterPro" id="IPR004468">
    <property type="entry name" value="CTP_synthase"/>
</dbReference>
<dbReference type="InterPro" id="IPR017456">
    <property type="entry name" value="CTP_synthase_N"/>
</dbReference>
<dbReference type="InterPro" id="IPR017926">
    <property type="entry name" value="GATASE"/>
</dbReference>
<dbReference type="InterPro" id="IPR033828">
    <property type="entry name" value="GATase1_CTP_Synthase"/>
</dbReference>
<dbReference type="InterPro" id="IPR027417">
    <property type="entry name" value="P-loop_NTPase"/>
</dbReference>
<dbReference type="NCBIfam" id="NF003792">
    <property type="entry name" value="PRK05380.1"/>
    <property type="match status" value="1"/>
</dbReference>
<dbReference type="NCBIfam" id="TIGR00337">
    <property type="entry name" value="PyrG"/>
    <property type="match status" value="1"/>
</dbReference>
<dbReference type="PANTHER" id="PTHR11550">
    <property type="entry name" value="CTP SYNTHASE"/>
    <property type="match status" value="1"/>
</dbReference>
<dbReference type="PANTHER" id="PTHR11550:SF0">
    <property type="entry name" value="CTP SYNTHASE-RELATED"/>
    <property type="match status" value="1"/>
</dbReference>
<dbReference type="Pfam" id="PF06418">
    <property type="entry name" value="CTP_synth_N"/>
    <property type="match status" value="1"/>
</dbReference>
<dbReference type="Pfam" id="PF00117">
    <property type="entry name" value="GATase"/>
    <property type="match status" value="1"/>
</dbReference>
<dbReference type="SUPFAM" id="SSF52317">
    <property type="entry name" value="Class I glutamine amidotransferase-like"/>
    <property type="match status" value="1"/>
</dbReference>
<dbReference type="SUPFAM" id="SSF52540">
    <property type="entry name" value="P-loop containing nucleoside triphosphate hydrolases"/>
    <property type="match status" value="1"/>
</dbReference>
<dbReference type="PROSITE" id="PS51273">
    <property type="entry name" value="GATASE_TYPE_1"/>
    <property type="match status" value="1"/>
</dbReference>
<accession>Q9CI75</accession>
<reference key="1">
    <citation type="journal article" date="2001" name="Genome Res.">
        <title>The complete genome sequence of the lactic acid bacterium Lactococcus lactis ssp. lactis IL1403.</title>
        <authorList>
            <person name="Bolotin A."/>
            <person name="Wincker P."/>
            <person name="Mauger S."/>
            <person name="Jaillon O."/>
            <person name="Malarme K."/>
            <person name="Weissenbach J."/>
            <person name="Ehrlich S.D."/>
            <person name="Sorokin A."/>
        </authorList>
    </citation>
    <scope>NUCLEOTIDE SEQUENCE [LARGE SCALE GENOMIC DNA]</scope>
    <source>
        <strain>IL1403</strain>
    </source>
</reference>
<feature type="chain" id="PRO_0000138191" description="CTP synthase">
    <location>
        <begin position="1"/>
        <end position="535"/>
    </location>
</feature>
<feature type="domain" description="Glutamine amidotransferase type-1" evidence="1">
    <location>
        <begin position="293"/>
        <end position="535"/>
    </location>
</feature>
<feature type="region of interest" description="Amidoligase domain" evidence="1">
    <location>
        <begin position="1"/>
        <end position="268"/>
    </location>
</feature>
<feature type="active site" description="Nucleophile; for glutamine hydrolysis" evidence="1">
    <location>
        <position position="382"/>
    </location>
</feature>
<feature type="active site" evidence="1">
    <location>
        <position position="509"/>
    </location>
</feature>
<feature type="active site" evidence="1">
    <location>
        <position position="511"/>
    </location>
</feature>
<feature type="binding site" evidence="1">
    <location>
        <position position="14"/>
    </location>
    <ligand>
        <name>CTP</name>
        <dbReference type="ChEBI" id="CHEBI:37563"/>
        <note>allosteric inhibitor</note>
    </ligand>
</feature>
<feature type="binding site" evidence="1">
    <location>
        <position position="14"/>
    </location>
    <ligand>
        <name>UTP</name>
        <dbReference type="ChEBI" id="CHEBI:46398"/>
    </ligand>
</feature>
<feature type="binding site" evidence="1">
    <location>
        <begin position="15"/>
        <end position="20"/>
    </location>
    <ligand>
        <name>ATP</name>
        <dbReference type="ChEBI" id="CHEBI:30616"/>
    </ligand>
</feature>
<feature type="binding site" evidence="1">
    <location>
        <position position="55"/>
    </location>
    <ligand>
        <name>L-glutamine</name>
        <dbReference type="ChEBI" id="CHEBI:58359"/>
    </ligand>
</feature>
<feature type="binding site" evidence="1">
    <location>
        <position position="72"/>
    </location>
    <ligand>
        <name>ATP</name>
        <dbReference type="ChEBI" id="CHEBI:30616"/>
    </ligand>
</feature>
<feature type="binding site" evidence="1">
    <location>
        <position position="72"/>
    </location>
    <ligand>
        <name>Mg(2+)</name>
        <dbReference type="ChEBI" id="CHEBI:18420"/>
    </ligand>
</feature>
<feature type="binding site" evidence="1">
    <location>
        <position position="142"/>
    </location>
    <ligand>
        <name>Mg(2+)</name>
        <dbReference type="ChEBI" id="CHEBI:18420"/>
    </ligand>
</feature>
<feature type="binding site" evidence="1">
    <location>
        <begin position="149"/>
        <end position="151"/>
    </location>
    <ligand>
        <name>CTP</name>
        <dbReference type="ChEBI" id="CHEBI:37563"/>
        <note>allosteric inhibitor</note>
    </ligand>
</feature>
<feature type="binding site" evidence="1">
    <location>
        <begin position="189"/>
        <end position="194"/>
    </location>
    <ligand>
        <name>CTP</name>
        <dbReference type="ChEBI" id="CHEBI:37563"/>
        <note>allosteric inhibitor</note>
    </ligand>
</feature>
<feature type="binding site" evidence="1">
    <location>
        <begin position="189"/>
        <end position="194"/>
    </location>
    <ligand>
        <name>UTP</name>
        <dbReference type="ChEBI" id="CHEBI:46398"/>
    </ligand>
</feature>
<feature type="binding site" evidence="1">
    <location>
        <position position="225"/>
    </location>
    <ligand>
        <name>CTP</name>
        <dbReference type="ChEBI" id="CHEBI:37563"/>
        <note>allosteric inhibitor</note>
    </ligand>
</feature>
<feature type="binding site" evidence="1">
    <location>
        <position position="225"/>
    </location>
    <ligand>
        <name>UTP</name>
        <dbReference type="ChEBI" id="CHEBI:46398"/>
    </ligand>
</feature>
<feature type="binding site" evidence="1">
    <location>
        <position position="355"/>
    </location>
    <ligand>
        <name>L-glutamine</name>
        <dbReference type="ChEBI" id="CHEBI:58359"/>
    </ligand>
</feature>
<feature type="binding site" evidence="1">
    <location>
        <begin position="383"/>
        <end position="386"/>
    </location>
    <ligand>
        <name>L-glutamine</name>
        <dbReference type="ChEBI" id="CHEBI:58359"/>
    </ligand>
</feature>
<feature type="binding site" evidence="1">
    <location>
        <position position="406"/>
    </location>
    <ligand>
        <name>L-glutamine</name>
        <dbReference type="ChEBI" id="CHEBI:58359"/>
    </ligand>
</feature>
<feature type="binding site" evidence="1">
    <location>
        <position position="464"/>
    </location>
    <ligand>
        <name>L-glutamine</name>
        <dbReference type="ChEBI" id="CHEBI:58359"/>
    </ligand>
</feature>
<comment type="function">
    <text evidence="1">Catalyzes the ATP-dependent amination of UTP to CTP with either L-glutamine or ammonia as the source of nitrogen. Regulates intracellular CTP levels through interactions with the four ribonucleotide triphosphates.</text>
</comment>
<comment type="catalytic activity">
    <reaction evidence="1">
        <text>UTP + L-glutamine + ATP + H2O = CTP + L-glutamate + ADP + phosphate + 2 H(+)</text>
        <dbReference type="Rhea" id="RHEA:26426"/>
        <dbReference type="ChEBI" id="CHEBI:15377"/>
        <dbReference type="ChEBI" id="CHEBI:15378"/>
        <dbReference type="ChEBI" id="CHEBI:29985"/>
        <dbReference type="ChEBI" id="CHEBI:30616"/>
        <dbReference type="ChEBI" id="CHEBI:37563"/>
        <dbReference type="ChEBI" id="CHEBI:43474"/>
        <dbReference type="ChEBI" id="CHEBI:46398"/>
        <dbReference type="ChEBI" id="CHEBI:58359"/>
        <dbReference type="ChEBI" id="CHEBI:456216"/>
        <dbReference type="EC" id="6.3.4.2"/>
    </reaction>
</comment>
<comment type="catalytic activity">
    <reaction evidence="1">
        <text>L-glutamine + H2O = L-glutamate + NH4(+)</text>
        <dbReference type="Rhea" id="RHEA:15889"/>
        <dbReference type="ChEBI" id="CHEBI:15377"/>
        <dbReference type="ChEBI" id="CHEBI:28938"/>
        <dbReference type="ChEBI" id="CHEBI:29985"/>
        <dbReference type="ChEBI" id="CHEBI:58359"/>
    </reaction>
</comment>
<comment type="catalytic activity">
    <reaction evidence="1">
        <text>UTP + NH4(+) + ATP = CTP + ADP + phosphate + 2 H(+)</text>
        <dbReference type="Rhea" id="RHEA:16597"/>
        <dbReference type="ChEBI" id="CHEBI:15378"/>
        <dbReference type="ChEBI" id="CHEBI:28938"/>
        <dbReference type="ChEBI" id="CHEBI:30616"/>
        <dbReference type="ChEBI" id="CHEBI:37563"/>
        <dbReference type="ChEBI" id="CHEBI:43474"/>
        <dbReference type="ChEBI" id="CHEBI:46398"/>
        <dbReference type="ChEBI" id="CHEBI:456216"/>
    </reaction>
</comment>
<comment type="activity regulation">
    <text evidence="1">Allosterically activated by GTP, when glutamine is the substrate; GTP has no effect on the reaction when ammonia is the substrate. The allosteric effector GTP functions by stabilizing the protein conformation that binds the tetrahedral intermediate(s) formed during glutamine hydrolysis. Inhibited by the product CTP, via allosteric rather than competitive inhibition.</text>
</comment>
<comment type="pathway">
    <text evidence="1">Pyrimidine metabolism; CTP biosynthesis via de novo pathway; CTP from UDP: step 2/2.</text>
</comment>
<comment type="subunit">
    <text evidence="1">Homotetramer.</text>
</comment>
<comment type="miscellaneous">
    <text evidence="1">CTPSs have evolved a hybrid strategy for distinguishing between UTP and CTP. The overlapping regions of the product feedback inhibitory and substrate sites recognize a common feature in both compounds, the triphosphate moiety. To differentiate isosteric substrate and product pyrimidine rings, an additional pocket far from the expected kinase/ligase catalytic site, specifically recognizes the cytosine and ribose portions of the product inhibitor.</text>
</comment>
<comment type="similarity">
    <text evidence="1">Belongs to the CTP synthase family.</text>
</comment>
<gene>
    <name evidence="1" type="primary">pyrG</name>
    <name type="ordered locus">LL0491</name>
    <name type="ORF">L88252</name>
</gene>
<evidence type="ECO:0000255" key="1">
    <source>
        <dbReference type="HAMAP-Rule" id="MF_01227"/>
    </source>
</evidence>
<keyword id="KW-0067">ATP-binding</keyword>
<keyword id="KW-0315">Glutamine amidotransferase</keyword>
<keyword id="KW-0436">Ligase</keyword>
<keyword id="KW-0460">Magnesium</keyword>
<keyword id="KW-0479">Metal-binding</keyword>
<keyword id="KW-0547">Nucleotide-binding</keyword>
<keyword id="KW-0665">Pyrimidine biosynthesis</keyword>
<keyword id="KW-1185">Reference proteome</keyword>
<protein>
    <recommendedName>
        <fullName evidence="1">CTP synthase</fullName>
        <ecNumber evidence="1">6.3.4.2</ecNumber>
    </recommendedName>
    <alternativeName>
        <fullName evidence="1">Cytidine 5'-triphosphate synthase</fullName>
    </alternativeName>
    <alternativeName>
        <fullName evidence="1">Cytidine triphosphate synthetase</fullName>
        <shortName evidence="1">CTP synthetase</shortName>
        <shortName evidence="1">CTPS</shortName>
    </alternativeName>
    <alternativeName>
        <fullName evidence="1">UTP--ammonia ligase</fullName>
    </alternativeName>
</protein>
<proteinExistence type="inferred from homology"/>
<sequence length="535" mass="59552">MSTKYIFVTGGGTSSMGKGIVAASLGRLLKNRGLKVTVQKFDPYLNIDPGTMSPYQHGEVFVTDDGAETDLDLGHYERFIDINLNKYSNVTSGKVYSEILRKERKGEYLGATVQMVPHVTNMLKEKIKRAATTTDADIIITEVGGTVGDMESLPFIEALRQMKAEVGADNVMYIHTVPILHLRAAGELKTKIAQNATKTLREYGIQANMLVLRSEVPITTEMRDKIAMFCDVAPEAVIQSLDVEHLYQIPLNLQAQNMDQIVCDHLKLDAPKADMTEWSAMVDHVMNLKKKVKIALVGKYVELPDAYISVTEALKHAGYSSDAEVDINWVNANDVTDENVAELVGDAAGIIVPGGFGHRGTEGKIAAIKYARENDVPMLGICLGMQLTAVEFARNVLGLEGAHSFELDPETKYPVIDIMRDQVDVEDMGGTLRLGLYPAKLKNGSRAKAAYNDAEVVQRRHRHRYEFNNKFREDFEKAGFVFSGVSPDNRLVEIVELSDKKFFVACQYHPELQSRPNRPEELYTEFIRVAVENSK</sequence>
<organism>
    <name type="scientific">Lactococcus lactis subsp. lactis (strain IL1403)</name>
    <name type="common">Streptococcus lactis</name>
    <dbReference type="NCBI Taxonomy" id="272623"/>
    <lineage>
        <taxon>Bacteria</taxon>
        <taxon>Bacillati</taxon>
        <taxon>Bacillota</taxon>
        <taxon>Bacilli</taxon>
        <taxon>Lactobacillales</taxon>
        <taxon>Streptococcaceae</taxon>
        <taxon>Lactococcus</taxon>
    </lineage>
</organism>
<name>PYRG_LACLA</name>